<comment type="function">
    <text evidence="1 2 5 6 8">Component of the cleavage factor IA (CF IA) complex, which is involved in the endonucleolytic cleavage during polyadenylation-dependent pre-mRNA 3'-end formation. Associates with HRB1/CF IB to form the cleavage factor I (CF I) complex. CF I is required for correct positioning of a larger protein complex, the cleavage and polyadenylation factor (CPF) complex, which contains the catalytic subunits executing mRNA cleavage and polyadenylation. CLP1 mediates interactions between CF IA and CPF factors. CLP1 is also involved in maintaining the CF IA interaction with the C-terminal domain of RNA Pol II largest subunit via PCF11, which links pre-mRNA 3'-end processing to transcription termination.</text>
</comment>
<comment type="subunit">
    <text evidence="3 5 7 8 9">Component of the cleavage factor IA (CF IA) complex, which is a heterohexameric complex with 2:2:1:1 stoichiometry of RNA14, RNA15, PCF11 and CLP1. It contains 2 copies of an RNA14-RNA15 dimer and 1 copy of CLP1-PCF11. The complex interacts with the cleavage factor HRB1/CF IB to form the cleavage factor I (CF I) complex, and binds to RNA. Interacts directly with PCF11. Interacts with the CPF components CFT1, PTA1, PFS2, YSH1 and SSU72.</text>
</comment>
<comment type="interaction">
    <interactant intactId="EBI-29732">
        <id>Q08685</id>
    </interactant>
    <interactant intactId="EBI-12980">
        <id>P39081</id>
        <label>PCF11</label>
    </interactant>
    <organismsDiffer>false</organismsDiffer>
    <experiments>14</experiments>
</comment>
<comment type="subcellular location">
    <subcellularLocation>
        <location evidence="1">Nucleus</location>
    </subcellularLocation>
</comment>
<comment type="disruption phenotype">
    <text evidence="8">Causes defective 3'-end formation and transcriptional read-through.</text>
</comment>
<comment type="similarity">
    <text evidence="1">Belongs to the Clp1 family. Clp1 subfamily.</text>
</comment>
<comment type="caution">
    <text evidence="10">May lack the polyribonucleotide 5'-hydroxyl-kinase and polynucleotide 5'-hydroxyl-kinase activities that are characteristic of the human ortholog.</text>
</comment>
<evidence type="ECO:0000255" key="1">
    <source>
        <dbReference type="HAMAP-Rule" id="MF_03035"/>
    </source>
</evidence>
<evidence type="ECO:0000269" key="2">
    <source>
    </source>
</evidence>
<evidence type="ECO:0000269" key="3">
    <source>
    </source>
</evidence>
<evidence type="ECO:0000269" key="4">
    <source>
    </source>
</evidence>
<evidence type="ECO:0000269" key="5">
    <source>
    </source>
</evidence>
<evidence type="ECO:0000269" key="6">
    <source>
    </source>
</evidence>
<evidence type="ECO:0000269" key="7">
    <source>
    </source>
</evidence>
<evidence type="ECO:0000269" key="8">
    <source>
    </source>
</evidence>
<evidence type="ECO:0000269" key="9">
    <source>
    </source>
</evidence>
<evidence type="ECO:0000305" key="10"/>
<evidence type="ECO:0007829" key="11">
    <source>
        <dbReference type="PDB" id="2NPI"/>
    </source>
</evidence>
<evidence type="ECO:0007829" key="12">
    <source>
        <dbReference type="PDB" id="4OI4"/>
    </source>
</evidence>
<proteinExistence type="evidence at protein level"/>
<protein>
    <recommendedName>
        <fullName evidence="1">mRNA cleavage and polyadenylation factor CLP1</fullName>
    </recommendedName>
</protein>
<dbReference type="EMBL" id="Z75158">
    <property type="protein sequence ID" value="CAA99472.1"/>
    <property type="molecule type" value="Genomic_DNA"/>
</dbReference>
<dbReference type="EMBL" id="AY558048">
    <property type="protein sequence ID" value="AAS56374.1"/>
    <property type="molecule type" value="Genomic_DNA"/>
</dbReference>
<dbReference type="EMBL" id="BK006948">
    <property type="protein sequence ID" value="DAA11017.1"/>
    <property type="molecule type" value="Genomic_DNA"/>
</dbReference>
<dbReference type="PIR" id="S67147">
    <property type="entry name" value="S67147"/>
</dbReference>
<dbReference type="RefSeq" id="NP_014893.1">
    <property type="nucleotide sequence ID" value="NM_001183669.1"/>
</dbReference>
<dbReference type="PDB" id="2NPI">
    <property type="method" value="X-ray"/>
    <property type="resolution" value="2.95 A"/>
    <property type="chains" value="A/B=2-445"/>
</dbReference>
<dbReference type="PDB" id="4C0B">
    <property type="method" value="X-ray"/>
    <property type="resolution" value="2.77 A"/>
    <property type="chains" value="A/B=1-445"/>
</dbReference>
<dbReference type="PDB" id="4C0H">
    <property type="method" value="X-ray"/>
    <property type="resolution" value="2.70 A"/>
    <property type="chains" value="A/B=1-445"/>
</dbReference>
<dbReference type="PDB" id="4OI4">
    <property type="method" value="X-ray"/>
    <property type="resolution" value="2.40 A"/>
    <property type="chains" value="A/C=1-445"/>
</dbReference>
<dbReference type="PDBsum" id="2NPI"/>
<dbReference type="PDBsum" id="4C0B"/>
<dbReference type="PDBsum" id="4C0H"/>
<dbReference type="PDBsum" id="4OI4"/>
<dbReference type="SMR" id="Q08685"/>
<dbReference type="BioGRID" id="34640">
    <property type="interactions" value="449"/>
</dbReference>
<dbReference type="ComplexPortal" id="CPX-1895">
    <property type="entry name" value="mRNA cleavage factor complex CFIA"/>
</dbReference>
<dbReference type="ComplexPortal" id="CPX-1896">
    <property type="entry name" value="mRNA cleavage factor complex CFI"/>
</dbReference>
<dbReference type="DIP" id="DIP-1487N"/>
<dbReference type="FunCoup" id="Q08685">
    <property type="interactions" value="934"/>
</dbReference>
<dbReference type="IntAct" id="Q08685">
    <property type="interactions" value="10"/>
</dbReference>
<dbReference type="MINT" id="Q08685"/>
<dbReference type="STRING" id="4932.YOR250C"/>
<dbReference type="iPTMnet" id="Q08685"/>
<dbReference type="PaxDb" id="4932-YOR250C"/>
<dbReference type="PeptideAtlas" id="Q08685"/>
<dbReference type="EnsemblFungi" id="YOR250C_mRNA">
    <property type="protein sequence ID" value="YOR250C"/>
    <property type="gene ID" value="YOR250C"/>
</dbReference>
<dbReference type="GeneID" id="854424"/>
<dbReference type="KEGG" id="sce:YOR250C"/>
<dbReference type="AGR" id="SGD:S000005776"/>
<dbReference type="SGD" id="S000005776">
    <property type="gene designation" value="CLP1"/>
</dbReference>
<dbReference type="VEuPathDB" id="FungiDB:YOR250C"/>
<dbReference type="eggNOG" id="KOG2749">
    <property type="taxonomic scope" value="Eukaryota"/>
</dbReference>
<dbReference type="GeneTree" id="ENSGT00940000153668"/>
<dbReference type="HOGENOM" id="CLU_018195_3_1_1"/>
<dbReference type="InParanoid" id="Q08685"/>
<dbReference type="OMA" id="VQYVNCH"/>
<dbReference type="OrthoDB" id="258143at2759"/>
<dbReference type="BioCyc" id="YEAST:G3O-33742-MONOMER"/>
<dbReference type="BioGRID-ORCS" id="854424">
    <property type="hits" value="5 hits in 10 CRISPR screens"/>
</dbReference>
<dbReference type="EvolutionaryTrace" id="Q08685"/>
<dbReference type="PRO" id="PR:Q08685"/>
<dbReference type="Proteomes" id="UP000002311">
    <property type="component" value="Chromosome XV"/>
</dbReference>
<dbReference type="RNAct" id="Q08685">
    <property type="molecule type" value="protein"/>
</dbReference>
<dbReference type="GO" id="GO:0005849">
    <property type="term" value="C:mRNA cleavage factor complex"/>
    <property type="evidence" value="ECO:0000353"/>
    <property type="project" value="ComplexPortal"/>
</dbReference>
<dbReference type="GO" id="GO:0005634">
    <property type="term" value="C:nucleus"/>
    <property type="evidence" value="ECO:0000318"/>
    <property type="project" value="GO_Central"/>
</dbReference>
<dbReference type="GO" id="GO:0005524">
    <property type="term" value="F:ATP binding"/>
    <property type="evidence" value="ECO:0007669"/>
    <property type="project" value="UniProtKB-UniRule"/>
</dbReference>
<dbReference type="GO" id="GO:0051731">
    <property type="term" value="F:polynucleotide 5'-hydroxyl-kinase activity"/>
    <property type="evidence" value="ECO:0000318"/>
    <property type="project" value="GO_Central"/>
</dbReference>
<dbReference type="GO" id="GO:0003723">
    <property type="term" value="F:RNA binding"/>
    <property type="evidence" value="ECO:0000314"/>
    <property type="project" value="SGD"/>
</dbReference>
<dbReference type="GO" id="GO:0031124">
    <property type="term" value="P:mRNA 3'-end processing"/>
    <property type="evidence" value="ECO:0000314"/>
    <property type="project" value="SGD"/>
</dbReference>
<dbReference type="GO" id="GO:0006388">
    <property type="term" value="P:tRNA splicing, via endonucleolytic cleavage and ligation"/>
    <property type="evidence" value="ECO:0000318"/>
    <property type="project" value="GO_Central"/>
</dbReference>
<dbReference type="FunFam" id="2.40.30.330:FF:000003">
    <property type="entry name" value="mRNA cleavage and polyadenylation factor CLP1"/>
    <property type="match status" value="1"/>
</dbReference>
<dbReference type="FunFam" id="3.40.50.300:FF:002525">
    <property type="entry name" value="mRNA cleavage and polyadenylation factor CLP1"/>
    <property type="match status" value="1"/>
</dbReference>
<dbReference type="Gene3D" id="2.60.120.1030">
    <property type="entry name" value="Clp1, DNA binding domain"/>
    <property type="match status" value="1"/>
</dbReference>
<dbReference type="Gene3D" id="3.40.50.300">
    <property type="entry name" value="P-loop containing nucleotide triphosphate hydrolases"/>
    <property type="match status" value="1"/>
</dbReference>
<dbReference type="Gene3D" id="2.40.30.330">
    <property type="entry name" value="Pre-mRNA cleavage complex subunit Clp1, C-terminal domain"/>
    <property type="match status" value="1"/>
</dbReference>
<dbReference type="HAMAP" id="MF_03035">
    <property type="entry name" value="Clp1"/>
    <property type="match status" value="1"/>
</dbReference>
<dbReference type="InterPro" id="IPR028606">
    <property type="entry name" value="Clp1"/>
</dbReference>
<dbReference type="InterPro" id="IPR045116">
    <property type="entry name" value="Clp1/Grc3"/>
</dbReference>
<dbReference type="InterPro" id="IPR010655">
    <property type="entry name" value="Clp1_C"/>
</dbReference>
<dbReference type="InterPro" id="IPR038238">
    <property type="entry name" value="Clp1_C_sf"/>
</dbReference>
<dbReference type="InterPro" id="IPR032324">
    <property type="entry name" value="Clp1_N"/>
</dbReference>
<dbReference type="InterPro" id="IPR038239">
    <property type="entry name" value="Clp1_N_sf"/>
</dbReference>
<dbReference type="InterPro" id="IPR032319">
    <property type="entry name" value="CLP1_P"/>
</dbReference>
<dbReference type="InterPro" id="IPR027417">
    <property type="entry name" value="P-loop_NTPase"/>
</dbReference>
<dbReference type="PANTHER" id="PTHR12755">
    <property type="entry name" value="CLEAVAGE/POLYADENYLATION FACTOR IA SUBUNIT CLP1P"/>
    <property type="match status" value="1"/>
</dbReference>
<dbReference type="PANTHER" id="PTHR12755:SF6">
    <property type="entry name" value="POLYRIBONUCLEOTIDE 5'-HYDROXYL-KINASE CLP1"/>
    <property type="match status" value="1"/>
</dbReference>
<dbReference type="Pfam" id="PF06807">
    <property type="entry name" value="Clp1"/>
    <property type="match status" value="1"/>
</dbReference>
<dbReference type="Pfam" id="PF16573">
    <property type="entry name" value="CLP1_N"/>
    <property type="match status" value="1"/>
</dbReference>
<dbReference type="Pfam" id="PF16575">
    <property type="entry name" value="CLP1_P"/>
    <property type="match status" value="1"/>
</dbReference>
<dbReference type="SUPFAM" id="SSF52540">
    <property type="entry name" value="P-loop containing nucleoside triphosphate hydrolases"/>
    <property type="match status" value="1"/>
</dbReference>
<reference key="1">
    <citation type="journal article" date="1997" name="Yeast">
        <title>Sequencing analysis of a 36.8 kb fragment of yeast chromosome XV reveals 26 open reading frames including SEC63, CDC31, SUG2, GCD1, RBL2, PNT1, PAC1 and VPH1.</title>
        <authorList>
            <person name="Poirey R."/>
            <person name="Jauniaux J.-C."/>
        </authorList>
    </citation>
    <scope>NUCLEOTIDE SEQUENCE [GENOMIC DNA]</scope>
</reference>
<reference key="2">
    <citation type="journal article" date="1997" name="Nature">
        <title>The nucleotide sequence of Saccharomyces cerevisiae chromosome XV.</title>
        <authorList>
            <person name="Dujon B."/>
            <person name="Albermann K."/>
            <person name="Aldea M."/>
            <person name="Alexandraki D."/>
            <person name="Ansorge W."/>
            <person name="Arino J."/>
            <person name="Benes V."/>
            <person name="Bohn C."/>
            <person name="Bolotin-Fukuhara M."/>
            <person name="Bordonne R."/>
            <person name="Boyer J."/>
            <person name="Camasses A."/>
            <person name="Casamayor A."/>
            <person name="Casas C."/>
            <person name="Cheret G."/>
            <person name="Cziepluch C."/>
            <person name="Daignan-Fornier B."/>
            <person name="Dang V.-D."/>
            <person name="de Haan M."/>
            <person name="Delius H."/>
            <person name="Durand P."/>
            <person name="Fairhead C."/>
            <person name="Feldmann H."/>
            <person name="Gaillon L."/>
            <person name="Galisson F."/>
            <person name="Gamo F.-J."/>
            <person name="Gancedo C."/>
            <person name="Goffeau A."/>
            <person name="Goulding S.E."/>
            <person name="Grivell L.A."/>
            <person name="Habbig B."/>
            <person name="Hand N.J."/>
            <person name="Hani J."/>
            <person name="Hattenhorst U."/>
            <person name="Hebling U."/>
            <person name="Hernando Y."/>
            <person name="Herrero E."/>
            <person name="Heumann K."/>
            <person name="Hiesel R."/>
            <person name="Hilger F."/>
            <person name="Hofmann B."/>
            <person name="Hollenberg C.P."/>
            <person name="Hughes B."/>
            <person name="Jauniaux J.-C."/>
            <person name="Kalogeropoulos A."/>
            <person name="Katsoulou C."/>
            <person name="Kordes E."/>
            <person name="Lafuente M.J."/>
            <person name="Landt O."/>
            <person name="Louis E.J."/>
            <person name="Maarse A.C."/>
            <person name="Madania A."/>
            <person name="Mannhaupt G."/>
            <person name="Marck C."/>
            <person name="Martin R.P."/>
            <person name="Mewes H.-W."/>
            <person name="Michaux G."/>
            <person name="Paces V."/>
            <person name="Parle-McDermott A.G."/>
            <person name="Pearson B.M."/>
            <person name="Perrin A."/>
            <person name="Pettersson B."/>
            <person name="Poch O."/>
            <person name="Pohl T.M."/>
            <person name="Poirey R."/>
            <person name="Portetelle D."/>
            <person name="Pujol A."/>
            <person name="Purnelle B."/>
            <person name="Ramezani Rad M."/>
            <person name="Rechmann S."/>
            <person name="Schwager C."/>
            <person name="Schweizer M."/>
            <person name="Sor F."/>
            <person name="Sterky F."/>
            <person name="Tarassov I.A."/>
            <person name="Teodoru C."/>
            <person name="Tettelin H."/>
            <person name="Thierry A."/>
            <person name="Tobiasch E."/>
            <person name="Tzermia M."/>
            <person name="Uhlen M."/>
            <person name="Unseld M."/>
            <person name="Valens M."/>
            <person name="Vandenbol M."/>
            <person name="Vetter I."/>
            <person name="Vlcek C."/>
            <person name="Voet M."/>
            <person name="Volckaert G."/>
            <person name="Voss H."/>
            <person name="Wambutt R."/>
            <person name="Wedler H."/>
            <person name="Wiemann S."/>
            <person name="Winsor B."/>
            <person name="Wolfe K.H."/>
            <person name="Zollner A."/>
            <person name="Zumstein E."/>
            <person name="Kleine K."/>
        </authorList>
    </citation>
    <scope>NUCLEOTIDE SEQUENCE [LARGE SCALE GENOMIC DNA]</scope>
    <source>
        <strain>ATCC 204508 / S288c</strain>
    </source>
</reference>
<reference key="3">
    <citation type="journal article" date="2014" name="G3 (Bethesda)">
        <title>The reference genome sequence of Saccharomyces cerevisiae: Then and now.</title>
        <authorList>
            <person name="Engel S.R."/>
            <person name="Dietrich F.S."/>
            <person name="Fisk D.G."/>
            <person name="Binkley G."/>
            <person name="Balakrishnan R."/>
            <person name="Costanzo M.C."/>
            <person name="Dwight S.S."/>
            <person name="Hitz B.C."/>
            <person name="Karra K."/>
            <person name="Nash R.S."/>
            <person name="Weng S."/>
            <person name="Wong E.D."/>
            <person name="Lloyd P."/>
            <person name="Skrzypek M.S."/>
            <person name="Miyasato S.R."/>
            <person name="Simison M."/>
            <person name="Cherry J.M."/>
        </authorList>
    </citation>
    <scope>GENOME REANNOTATION</scope>
    <source>
        <strain>ATCC 204508 / S288c</strain>
    </source>
</reference>
<reference key="4">
    <citation type="journal article" date="2007" name="Genome Res.">
        <title>Approaching a complete repository of sequence-verified protein-encoding clones for Saccharomyces cerevisiae.</title>
        <authorList>
            <person name="Hu Y."/>
            <person name="Rolfs A."/>
            <person name="Bhullar B."/>
            <person name="Murthy T.V.S."/>
            <person name="Zhu C."/>
            <person name="Berger M.F."/>
            <person name="Camargo A.A."/>
            <person name="Kelley F."/>
            <person name="McCarron S."/>
            <person name="Jepson D."/>
            <person name="Richardson A."/>
            <person name="Raphael J."/>
            <person name="Moreira D."/>
            <person name="Taycher E."/>
            <person name="Zuo D."/>
            <person name="Mohr S."/>
            <person name="Kane M.F."/>
            <person name="Williamson J."/>
            <person name="Simpson A.J.G."/>
            <person name="Bulyk M.L."/>
            <person name="Harlow E."/>
            <person name="Marsischky G."/>
            <person name="Kolodner R.D."/>
            <person name="LaBaer J."/>
        </authorList>
    </citation>
    <scope>NUCLEOTIDE SEQUENCE [GENOMIC DNA]</scope>
    <source>
        <strain>ATCC 204508 / S288c</strain>
    </source>
</reference>
<reference key="5">
    <citation type="journal article" date="1996" name="J. Biol. Chem.">
        <title>Purification of the Saccharomyces cerevisiae cleavage/polyadenylation factor I. Separation into two components that are required for both cleavage and polyadenylation of mRNA 3' ends.</title>
        <authorList>
            <person name="Kessler M.M."/>
            <person name="Zhao J."/>
            <person name="Moore C.L."/>
        </authorList>
    </citation>
    <scope>COMPOSITION OF THE CFIA COMPLEX</scope>
</reference>
<reference key="6">
    <citation type="journal article" date="1997" name="Proc. Natl. Acad. Sci. U.S.A.">
        <title>The major yeast poly(A)-binding protein is associated with cleavage factor IA and functions in premessenger RNA 3'-end formation.</title>
        <authorList>
            <person name="Minvielle-Sebastia L."/>
            <person name="Preker P.J."/>
            <person name="Wiederkehr T."/>
            <person name="Strahm Y."/>
            <person name="Keller W."/>
        </authorList>
    </citation>
    <scope>IDENTIFICATION IN THE CFIA COMPLEX</scope>
</reference>
<reference key="7">
    <citation type="journal article" date="2001" name="Proc. Natl. Acad. Sci. U.S.A.">
        <title>Five subunits are required for reconstitution of the cleavage and polyadenylation activities of Saccharomyces cerevisiae cleavage factor I.</title>
        <authorList>
            <person name="Gross S."/>
            <person name="Moore C."/>
        </authorList>
    </citation>
    <scope>FUNCTION OF THE CFIA COMPLEX</scope>
</reference>
<reference key="8">
    <citation type="journal article" date="2008" name="RNA">
        <title>Human RNA 5'-kinase (hClp1) can function as a tRNA splicing enzyme in vivo.</title>
        <authorList>
            <person name="Ramirez A."/>
            <person name="Shuman S."/>
            <person name="Schwer B."/>
        </authorList>
    </citation>
    <scope>LACK OF POLYNUCLEOTIDE KINASE ACTIVITY</scope>
    <scope>MUTAGENESIS OF 136-LYS-THR-137 AND ASP-161</scope>
</reference>
<reference key="9">
    <citation type="journal article" date="2011" name="Biochemistry">
        <title>Reconstitution of CF IA from overexpressed subunits reveals stoichiometry and provides insights into molecular topology.</title>
        <authorList>
            <person name="Gordon J.M."/>
            <person name="Shikov S."/>
            <person name="Kuehner J.N."/>
            <person name="Liriano M."/>
            <person name="Lee E."/>
            <person name="Stafford W."/>
            <person name="Poulsen M.B."/>
            <person name="Harrison C."/>
            <person name="Moore C."/>
            <person name="Bohm A."/>
        </authorList>
    </citation>
    <scope>SUBUNIT</scope>
</reference>
<reference key="10">
    <citation type="journal article" date="2011" name="PLoS ONE">
        <title>The P-loop domain of yeast Clp1 mediates interactions between CF IA and CPF factors in pre-mRNA 3' end formation.</title>
        <authorList>
            <person name="Holbein S."/>
            <person name="Scola S."/>
            <person name="Loll B."/>
            <person name="Dichtl B.S."/>
            <person name="Hubner W."/>
            <person name="Meinhart A."/>
            <person name="Dichtl B."/>
        </authorList>
    </citation>
    <scope>FUNCTION</scope>
    <scope>SUBUNIT</scope>
    <scope>DISRUPTION PHENOTYPE</scope>
    <scope>MUTAGENESIS OF LYS-136; THR-137 AND ASP-161</scope>
</reference>
<reference key="11">
    <citation type="journal article" date="2012" name="Nucleic Acids Res.">
        <title>The interaction of Pcf11 and Clp1 is needed for mRNA 3'-end formation and is modulated by amino acids in the ATP-binding site.</title>
        <authorList>
            <person name="Ghazy M.A."/>
            <person name="Gordon J.M."/>
            <person name="Lee S.D."/>
            <person name="Singh B.N."/>
            <person name="Bohm A."/>
            <person name="Hampsey M."/>
            <person name="Moore C."/>
        </authorList>
    </citation>
    <scope>FUNCTION</scope>
    <scope>INTERACTION WITH PCF11</scope>
</reference>
<reference key="12">
    <citation type="journal article" date="2012" name="Nucleic Acids Res.">
        <title>An essential role for Clp1 in assembly of polyadenylation complex CF IA and Pol II transcription termination.</title>
        <authorList>
            <person name="Haddad R."/>
            <person name="Maurice F."/>
            <person name="Viphakone N."/>
            <person name="Voisinet-Hakil F."/>
            <person name="Fribourg S."/>
            <person name="Minvielle-Sebastia L."/>
        </authorList>
    </citation>
    <scope>FUNCTION</scope>
</reference>
<reference key="13">
    <citation type="journal article" date="2007" name="Nucleic Acids Res.">
        <title>Structure of a nucleotide-bound Clp1-Pcf11 polyadenylation factor.</title>
        <authorList>
            <person name="Noble C.G."/>
            <person name="Beuth B."/>
            <person name="Taylor I.A."/>
        </authorList>
    </citation>
    <scope>X-RAY CRYSTALLOGRAPHY (2.95 ANGSTROMS) OF 2-445 IN COMPLEX WITH ATP AND PCF11</scope>
</reference>
<gene>
    <name evidence="1" type="primary">CLP1</name>
    <name type="ordered locus">YOR250C</name>
</gene>
<sequence length="445" mass="50226">MASLPGIDEHTTSEELITGDNEWHKLVIPKGSDWQIDLKAEGKLIVKVNSGIVEIFGTELAVDDEYTFQNWKFPIYAVEETELLWKCPDLTTNTITVKPNHTMKYIYNLHFMLEKIRMSNFEGPRVVIVGGSQTGKTSLSRTLCSYALKFNAYQPLYINLDPQQPIFTVPGCISATPISDILDAQLPTWGQSLTSGATLLHNKQPMVKNFGLERINENKDLYLECISQLGQVVGQRLHLDPQVRRSGCIVDTPSISQLDENLAELHHIIEKLNVNIMLVLCSETDPLWEKVKKTFGPELGNNNIFFIPKLDGVSAVDDVYKRSLQRTSIREYFYGSLDTALSPYAIGVDYEDLTIWKPSNVFDNEVGRVELFPVTITPSNLQHAIIAITFAERRADQATVIKSPILGFALITEVNEKRRKLRVLLPVPGRLPSKAMILTSYRYLE</sequence>
<organism>
    <name type="scientific">Saccharomyces cerevisiae (strain ATCC 204508 / S288c)</name>
    <name type="common">Baker's yeast</name>
    <dbReference type="NCBI Taxonomy" id="559292"/>
    <lineage>
        <taxon>Eukaryota</taxon>
        <taxon>Fungi</taxon>
        <taxon>Dikarya</taxon>
        <taxon>Ascomycota</taxon>
        <taxon>Saccharomycotina</taxon>
        <taxon>Saccharomycetes</taxon>
        <taxon>Saccharomycetales</taxon>
        <taxon>Saccharomycetaceae</taxon>
        <taxon>Saccharomyces</taxon>
    </lineage>
</organism>
<feature type="chain" id="PRO_0000076211" description="mRNA cleavage and polyadenylation factor CLP1">
    <location>
        <begin position="1"/>
        <end position="445"/>
    </location>
</feature>
<feature type="binding site" evidence="1 3">
    <location>
        <position position="33"/>
    </location>
    <ligand>
        <name>ATP</name>
        <dbReference type="ChEBI" id="CHEBI:30616"/>
    </ligand>
</feature>
<feature type="binding site" evidence="1 3">
    <location>
        <position position="72"/>
    </location>
    <ligand>
        <name>ATP</name>
        <dbReference type="ChEBI" id="CHEBI:30616"/>
    </ligand>
</feature>
<feature type="binding site" evidence="1 3">
    <location>
        <begin position="133"/>
        <end position="138"/>
    </location>
    <ligand>
        <name>ATP</name>
        <dbReference type="ChEBI" id="CHEBI:30616"/>
    </ligand>
</feature>
<feature type="mutagenesis site" description="Completely abolishes interaction with PCF11. No effect on growth; when associated with A-137." evidence="8">
    <original>K</original>
    <variation>A</variation>
    <location>
        <position position="136"/>
    </location>
</feature>
<feature type="mutagenesis site" description="Completely abolishes interaction with PCF11. No effect on growth; when associated with A-136." evidence="8">
    <original>T</original>
    <variation>A</variation>
    <location>
        <position position="137"/>
    </location>
</feature>
<feature type="mutagenesis site" description="Compromises interaction with PCF11. No effect on growth." evidence="4 8">
    <original>D</original>
    <variation>A</variation>
    <location>
        <position position="161"/>
    </location>
</feature>
<feature type="strand" evidence="12">
    <location>
        <begin position="24"/>
        <end position="28"/>
    </location>
</feature>
<feature type="strand" evidence="12">
    <location>
        <begin position="32"/>
        <end position="37"/>
    </location>
</feature>
<feature type="strand" evidence="12">
    <location>
        <begin position="43"/>
        <end position="51"/>
    </location>
</feature>
<feature type="strand" evidence="12">
    <location>
        <begin position="53"/>
        <end position="55"/>
    </location>
</feature>
<feature type="strand" evidence="12">
    <location>
        <begin position="65"/>
        <end position="70"/>
    </location>
</feature>
<feature type="strand" evidence="12">
    <location>
        <begin position="72"/>
        <end position="79"/>
    </location>
</feature>
<feature type="strand" evidence="12">
    <location>
        <begin position="81"/>
        <end position="86"/>
    </location>
</feature>
<feature type="turn" evidence="12">
    <location>
        <begin position="92"/>
        <end position="94"/>
    </location>
</feature>
<feature type="strand" evidence="12">
    <location>
        <begin position="96"/>
        <end position="99"/>
    </location>
</feature>
<feature type="helix" evidence="12">
    <location>
        <begin position="103"/>
        <end position="119"/>
    </location>
</feature>
<feature type="strand" evidence="12">
    <location>
        <begin position="120"/>
        <end position="122"/>
    </location>
</feature>
<feature type="strand" evidence="12">
    <location>
        <begin position="125"/>
        <end position="131"/>
    </location>
</feature>
<feature type="helix" evidence="12">
    <location>
        <begin position="136"/>
        <end position="147"/>
    </location>
</feature>
<feature type="helix" evidence="11">
    <location>
        <begin position="148"/>
        <end position="151"/>
    </location>
</feature>
<feature type="strand" evidence="12">
    <location>
        <begin position="156"/>
        <end position="159"/>
    </location>
</feature>
<feature type="strand" evidence="12">
    <location>
        <begin position="166"/>
        <end position="168"/>
    </location>
</feature>
<feature type="strand" evidence="12">
    <location>
        <begin position="172"/>
        <end position="177"/>
    </location>
</feature>
<feature type="strand" evidence="12">
    <location>
        <begin position="194"/>
        <end position="196"/>
    </location>
</feature>
<feature type="strand" evidence="12">
    <location>
        <begin position="206"/>
        <end position="209"/>
    </location>
</feature>
<feature type="strand" evidence="12">
    <location>
        <begin position="212"/>
        <end position="214"/>
    </location>
</feature>
<feature type="helix" evidence="12">
    <location>
        <begin position="215"/>
        <end position="217"/>
    </location>
</feature>
<feature type="helix" evidence="12">
    <location>
        <begin position="219"/>
        <end position="239"/>
    </location>
</feature>
<feature type="helix" evidence="12">
    <location>
        <begin position="241"/>
        <end position="246"/>
    </location>
</feature>
<feature type="strand" evidence="12">
    <location>
        <begin position="248"/>
        <end position="251"/>
    </location>
</feature>
<feature type="helix" evidence="12">
    <location>
        <begin position="255"/>
        <end position="257"/>
    </location>
</feature>
<feature type="helix" evidence="12">
    <location>
        <begin position="263"/>
        <end position="271"/>
    </location>
</feature>
<feature type="strand" evidence="12">
    <location>
        <begin position="276"/>
        <end position="281"/>
    </location>
</feature>
<feature type="helix" evidence="12">
    <location>
        <begin position="286"/>
        <end position="299"/>
    </location>
</feature>
<feature type="helix" evidence="12">
    <location>
        <begin position="301"/>
        <end position="303"/>
    </location>
</feature>
<feature type="strand" evidence="12">
    <location>
        <begin position="304"/>
        <end position="307"/>
    </location>
</feature>
<feature type="helix" evidence="12">
    <location>
        <begin position="318"/>
        <end position="334"/>
    </location>
</feature>
<feature type="turn" evidence="11">
    <location>
        <begin position="337"/>
        <end position="339"/>
    </location>
</feature>
<feature type="strand" evidence="12">
    <location>
        <begin position="344"/>
        <end position="349"/>
    </location>
</feature>
<feature type="helix" evidence="12">
    <location>
        <begin position="350"/>
        <end position="352"/>
    </location>
</feature>
<feature type="strand" evidence="12">
    <location>
        <begin position="355"/>
        <end position="358"/>
    </location>
</feature>
<feature type="helix" evidence="12">
    <location>
        <begin position="361"/>
        <end position="364"/>
    </location>
</feature>
<feature type="strand" evidence="12">
    <location>
        <begin position="371"/>
        <end position="373"/>
    </location>
</feature>
<feature type="helix" evidence="12">
    <location>
        <begin position="378"/>
        <end position="381"/>
    </location>
</feature>
<feature type="strand" evidence="12">
    <location>
        <begin position="384"/>
        <end position="392"/>
    </location>
</feature>
<feature type="helix" evidence="12">
    <location>
        <begin position="397"/>
        <end position="402"/>
    </location>
</feature>
<feature type="strand" evidence="12">
    <location>
        <begin position="405"/>
        <end position="415"/>
    </location>
</feature>
<feature type="turn" evidence="12">
    <location>
        <begin position="416"/>
        <end position="419"/>
    </location>
</feature>
<feature type="strand" evidence="12">
    <location>
        <begin position="420"/>
        <end position="430"/>
    </location>
</feature>
<feature type="strand" evidence="12">
    <location>
        <begin position="434"/>
        <end position="442"/>
    </location>
</feature>
<keyword id="KW-0002">3D-structure</keyword>
<keyword id="KW-0067">ATP-binding</keyword>
<keyword id="KW-0507">mRNA processing</keyword>
<keyword id="KW-0547">Nucleotide-binding</keyword>
<keyword id="KW-0539">Nucleus</keyword>
<keyword id="KW-1185">Reference proteome</keyword>
<accession>Q08685</accession>
<accession>D6W2V1</accession>
<name>CLP1_YEAST</name>